<proteinExistence type="inferred from homology"/>
<evidence type="ECO:0000305" key="1"/>
<dbReference type="EC" id="2.1.1.289"/>
<dbReference type="EMBL" id="AL513382">
    <property type="protein sequence ID" value="CAD02392.1"/>
    <property type="molecule type" value="Genomic_DNA"/>
</dbReference>
<dbReference type="EMBL" id="AE014613">
    <property type="protein sequence ID" value="AAO68530.1"/>
    <property type="molecule type" value="Genomic_DNA"/>
</dbReference>
<dbReference type="RefSeq" id="NP_456582.1">
    <property type="nucleotide sequence ID" value="NC_003198.1"/>
</dbReference>
<dbReference type="RefSeq" id="WP_000958833.1">
    <property type="nucleotide sequence ID" value="NZ_WSUR01000002.1"/>
</dbReference>
<dbReference type="SMR" id="P0A2H2"/>
<dbReference type="STRING" id="220341.gene:17586147"/>
<dbReference type="KEGG" id="stt:t0843"/>
<dbReference type="KEGG" id="sty:STY2236"/>
<dbReference type="PATRIC" id="fig|220341.7.peg.2255"/>
<dbReference type="eggNOG" id="COG2241">
    <property type="taxonomic scope" value="Bacteria"/>
</dbReference>
<dbReference type="HOGENOM" id="CLU_089162_2_0_6"/>
<dbReference type="OMA" id="KISWEDY"/>
<dbReference type="OrthoDB" id="9787825at2"/>
<dbReference type="UniPathway" id="UPA00148">
    <property type="reaction ID" value="UER00229"/>
</dbReference>
<dbReference type="Proteomes" id="UP000000541">
    <property type="component" value="Chromosome"/>
</dbReference>
<dbReference type="Proteomes" id="UP000002670">
    <property type="component" value="Chromosome"/>
</dbReference>
<dbReference type="GO" id="GO:0043777">
    <property type="term" value="F:cobalt-precorrin-7 C15-methyltransferase activity"/>
    <property type="evidence" value="ECO:0007669"/>
    <property type="project" value="RHEA"/>
</dbReference>
<dbReference type="GO" id="GO:0008276">
    <property type="term" value="F:protein methyltransferase activity"/>
    <property type="evidence" value="ECO:0007669"/>
    <property type="project" value="InterPro"/>
</dbReference>
<dbReference type="GO" id="GO:0009236">
    <property type="term" value="P:cobalamin biosynthetic process"/>
    <property type="evidence" value="ECO:0007669"/>
    <property type="project" value="UniProtKB-UniPathway"/>
</dbReference>
<dbReference type="GO" id="GO:0032259">
    <property type="term" value="P:methylation"/>
    <property type="evidence" value="ECO:0007669"/>
    <property type="project" value="UniProtKB-KW"/>
</dbReference>
<dbReference type="CDD" id="cd11644">
    <property type="entry name" value="Precorrin-6Y-MT"/>
    <property type="match status" value="1"/>
</dbReference>
<dbReference type="Gene3D" id="3.40.1010.10">
    <property type="entry name" value="Cobalt-precorrin-4 Transmethylase, Domain 1"/>
    <property type="match status" value="1"/>
</dbReference>
<dbReference type="Gene3D" id="3.30.950.10">
    <property type="entry name" value="Methyltransferase, Cobalt-precorrin-4 Transmethylase, Domain 2"/>
    <property type="match status" value="1"/>
</dbReference>
<dbReference type="InterPro" id="IPR000878">
    <property type="entry name" value="4pyrrol_Mease"/>
</dbReference>
<dbReference type="InterPro" id="IPR035996">
    <property type="entry name" value="4pyrrol_Methylase_sf"/>
</dbReference>
<dbReference type="InterPro" id="IPR014777">
    <property type="entry name" value="4pyrrole_Mease_sub1"/>
</dbReference>
<dbReference type="InterPro" id="IPR014776">
    <property type="entry name" value="4pyrrole_Mease_sub2"/>
</dbReference>
<dbReference type="InterPro" id="IPR012818">
    <property type="entry name" value="CbiE"/>
</dbReference>
<dbReference type="InterPro" id="IPR050714">
    <property type="entry name" value="Cobalamin_biosynth_MTase"/>
</dbReference>
<dbReference type="NCBIfam" id="TIGR02467">
    <property type="entry name" value="CbiE"/>
    <property type="match status" value="1"/>
</dbReference>
<dbReference type="NCBIfam" id="NF004454">
    <property type="entry name" value="PRK05787.1-1"/>
    <property type="match status" value="1"/>
</dbReference>
<dbReference type="PANTHER" id="PTHR43182">
    <property type="entry name" value="COBALT-PRECORRIN-6B C(15)-METHYLTRANSFERASE (DECARBOXYLATING)"/>
    <property type="match status" value="1"/>
</dbReference>
<dbReference type="PANTHER" id="PTHR43182:SF1">
    <property type="entry name" value="COBALT-PRECORRIN-7 C(5)-METHYLTRANSFERASE"/>
    <property type="match status" value="1"/>
</dbReference>
<dbReference type="Pfam" id="PF00590">
    <property type="entry name" value="TP_methylase"/>
    <property type="match status" value="1"/>
</dbReference>
<dbReference type="SUPFAM" id="SSF53790">
    <property type="entry name" value="Tetrapyrrole methylase"/>
    <property type="match status" value="1"/>
</dbReference>
<comment type="function">
    <text>Catalyzes the methylation of C-5 in cobalt-precorrin-7 to form cobalt-precorrin-8.</text>
</comment>
<comment type="catalytic activity">
    <reaction>
        <text>Co-precorrin-7 + S-adenosyl-L-methionine = Co-precorrin-8X + S-adenosyl-L-homocysteine + H(+)</text>
        <dbReference type="Rhea" id="RHEA:34591"/>
        <dbReference type="ChEBI" id="CHEBI:15378"/>
        <dbReference type="ChEBI" id="CHEBI:57856"/>
        <dbReference type="ChEBI" id="CHEBI:59789"/>
        <dbReference type="ChEBI" id="CHEBI:70791"/>
        <dbReference type="ChEBI" id="CHEBI:70792"/>
        <dbReference type="EC" id="2.1.1.289"/>
    </reaction>
</comment>
<comment type="pathway">
    <text>Cofactor biosynthesis; adenosylcobalamin biosynthesis; cob(II)yrinate a,c-diamide from sirohydrochlorin (anaerobic route): step 8/10.</text>
</comment>
<comment type="similarity">
    <text evidence="1">Belongs to the precorrin methyltransferase family.</text>
</comment>
<reference key="1">
    <citation type="journal article" date="2001" name="Nature">
        <title>Complete genome sequence of a multiple drug resistant Salmonella enterica serovar Typhi CT18.</title>
        <authorList>
            <person name="Parkhill J."/>
            <person name="Dougan G."/>
            <person name="James K.D."/>
            <person name="Thomson N.R."/>
            <person name="Pickard D."/>
            <person name="Wain J."/>
            <person name="Churcher C.M."/>
            <person name="Mungall K.L."/>
            <person name="Bentley S.D."/>
            <person name="Holden M.T.G."/>
            <person name="Sebaihia M."/>
            <person name="Baker S."/>
            <person name="Basham D."/>
            <person name="Brooks K."/>
            <person name="Chillingworth T."/>
            <person name="Connerton P."/>
            <person name="Cronin A."/>
            <person name="Davis P."/>
            <person name="Davies R.M."/>
            <person name="Dowd L."/>
            <person name="White N."/>
            <person name="Farrar J."/>
            <person name="Feltwell T."/>
            <person name="Hamlin N."/>
            <person name="Haque A."/>
            <person name="Hien T.T."/>
            <person name="Holroyd S."/>
            <person name="Jagels K."/>
            <person name="Krogh A."/>
            <person name="Larsen T.S."/>
            <person name="Leather S."/>
            <person name="Moule S."/>
            <person name="O'Gaora P."/>
            <person name="Parry C."/>
            <person name="Quail M.A."/>
            <person name="Rutherford K.M."/>
            <person name="Simmonds M."/>
            <person name="Skelton J."/>
            <person name="Stevens K."/>
            <person name="Whitehead S."/>
            <person name="Barrell B.G."/>
        </authorList>
    </citation>
    <scope>NUCLEOTIDE SEQUENCE [LARGE SCALE GENOMIC DNA]</scope>
    <source>
        <strain>CT18</strain>
    </source>
</reference>
<reference key="2">
    <citation type="journal article" date="2003" name="J. Bacteriol.">
        <title>Comparative genomics of Salmonella enterica serovar Typhi strains Ty2 and CT18.</title>
        <authorList>
            <person name="Deng W."/>
            <person name="Liou S.-R."/>
            <person name="Plunkett G. III"/>
            <person name="Mayhew G.F."/>
            <person name="Rose D.J."/>
            <person name="Burland V."/>
            <person name="Kodoyianni V."/>
            <person name="Schwartz D.C."/>
            <person name="Blattner F.R."/>
        </authorList>
    </citation>
    <scope>NUCLEOTIDE SEQUENCE [LARGE SCALE GENOMIC DNA]</scope>
    <source>
        <strain>ATCC 700931 / Ty2</strain>
    </source>
</reference>
<name>CBIE_SALTI</name>
<accession>P0A2H2</accession>
<accession>Q05629</accession>
<organism>
    <name type="scientific">Salmonella typhi</name>
    <dbReference type="NCBI Taxonomy" id="90370"/>
    <lineage>
        <taxon>Bacteria</taxon>
        <taxon>Pseudomonadati</taxon>
        <taxon>Pseudomonadota</taxon>
        <taxon>Gammaproteobacteria</taxon>
        <taxon>Enterobacterales</taxon>
        <taxon>Enterobacteriaceae</taxon>
        <taxon>Salmonella</taxon>
    </lineage>
</organism>
<keyword id="KW-0169">Cobalamin biosynthesis</keyword>
<keyword id="KW-0489">Methyltransferase</keyword>
<keyword id="KW-0949">S-adenosyl-L-methionine</keyword>
<keyword id="KW-0808">Transferase</keyword>
<sequence length="201" mass="21778">MLTVVGMGPAGRHLMTPAALEAIDHADALAGGKRHLAQFPAFGGERFTLGADIGALLSWIAARRDKGIVVLASGDPLFYGIGTRLVAHFGIEQVRIIPGISAVQYLCAQAGIDMNDMWLTSSHGRCVSFEQLANHRKVAMVTDARCGPREIARELVARGKGHRLMVIGENLAMENERIHWLPVSAVNADYEMNAVVILDER</sequence>
<gene>
    <name type="primary">cbiE</name>
    <name type="ordered locus">STY2236</name>
    <name type="ordered locus">t0843</name>
</gene>
<protein>
    <recommendedName>
        <fullName>Cobalt-precorrin-7 C(5)-methyltransferase</fullName>
        <ecNumber>2.1.1.289</ecNumber>
    </recommendedName>
    <alternativeName>
        <fullName>Cobalt-precorrin-6Y C(5)-methyltransferase</fullName>
        <shortName>Cobalt-precorrin-6 methyltransferase</shortName>
        <shortName>Cobalt-precorrin-6Y methylase</shortName>
    </alternativeName>
</protein>
<feature type="chain" id="PRO_0000150406" description="Cobalt-precorrin-7 C(5)-methyltransferase">
    <location>
        <begin position="1"/>
        <end position="201"/>
    </location>
</feature>